<keyword id="KW-0002">3D-structure</keyword>
<keyword id="KW-0025">Alternative splicing</keyword>
<keyword id="KW-0963">Cytoplasm</keyword>
<keyword id="KW-0217">Developmental protein</keyword>
<keyword id="KW-0221">Differentiation</keyword>
<keyword id="KW-0524">Neurogenesis</keyword>
<keyword id="KW-1185">Reference proteome</keyword>
<evidence type="ECO:0000250" key="1">
    <source>
        <dbReference type="UniProtKB" id="Q1MX18"/>
    </source>
</evidence>
<evidence type="ECO:0000269" key="2">
    <source>
    </source>
</evidence>
<evidence type="ECO:0000269" key="3">
    <source>
    </source>
</evidence>
<evidence type="ECO:0000269" key="4">
    <source>
    </source>
</evidence>
<evidence type="ECO:0000303" key="5">
    <source>
    </source>
</evidence>
<evidence type="ECO:0000303" key="6">
    <source>
    </source>
</evidence>
<evidence type="ECO:0000305" key="7"/>
<evidence type="ECO:0007744" key="8">
    <source>
        <dbReference type="PDB" id="3RO3"/>
    </source>
</evidence>
<evidence type="ECO:0007829" key="9">
    <source>
        <dbReference type="PDB" id="3RO3"/>
    </source>
</evidence>
<gene>
    <name type="primary">Insc</name>
</gene>
<protein>
    <recommendedName>
        <fullName>Protein inscuteable homolog</fullName>
    </recommendedName>
    <alternativeName>
        <fullName>Minsc</fullName>
    </alternativeName>
</protein>
<comment type="function">
    <text evidence="2 3 4">May function as an adapter linking the Par3 complex to the GPSM1/GPSM2 complex. Involved in spindle orientation during mitosis (PubMed:16301171, PubMed:21816348). May regulate cell proliferation and differentiation in the developing nervous system (PubMed:16301171). May play a role in the asymmetric division of fibroblasts and participate in the process of stratification of the squamous epithelium (PubMed:16094321).</text>
</comment>
<comment type="subunit">
    <text evidence="1 2 4">Interacts with ALS2CR19/PAR3B and GPSM1/AGS3 (By similarity). Interacts with F2RL2/PAR3 (PubMed:16094321). Interacts with GPSM2/LGN (via TPR repeat region) (PubMed:16094321, PubMed:21816348).</text>
</comment>
<comment type="subcellular location">
    <subcellularLocation>
        <location evidence="2 3 4">Cytoplasm</location>
    </subcellularLocation>
    <subcellularLocation>
        <location evidence="1">Cytoplasm</location>
        <location evidence="1">Cell cortex</location>
    </subcellularLocation>
    <text evidence="1">Uniformly distributed in the cytoplasm during interphase. During metaphase, detected in the cell cortex, adjacent to the mitotic spindle poles.</text>
</comment>
<comment type="alternative products">
    <event type="alternative splicing"/>
    <isoform>
        <id>Q3HNM7-1</id>
        <name>1</name>
        <sequence type="displayed"/>
    </isoform>
    <isoform>
        <id>Q3HNM7-2</id>
        <name>2</name>
        <sequence type="described" ref="VSP_020951"/>
    </isoform>
</comment>
<comment type="tissue specificity">
    <text evidence="2 3">Expressed in brain, kidney, liver, testis and skin.</text>
</comment>
<comment type="developmental stage">
    <text evidence="2">Expressed at 12.5 dpc in dorsal root and cranial glanglia in the developing brain. Detected at 14.5 dpc in skin epidermis (at protein level). First detected at 10.5 dpc in the dorsal root glanglia and cranial glanglia. At 12.5 dpc expression appears in retina, forebrain and outside of the nervous system. At 13.5 dpc a strong expression is detected in the cortex. Expressed in embryonic, newborn and adult skin.</text>
</comment>
<proteinExistence type="evidence at protein level"/>
<reference key="1">
    <citation type="journal article" date="2005" name="Science">
        <title>The transcriptional landscape of the mammalian genome.</title>
        <authorList>
            <person name="Carninci P."/>
            <person name="Kasukawa T."/>
            <person name="Katayama S."/>
            <person name="Gough J."/>
            <person name="Frith M.C."/>
            <person name="Maeda N."/>
            <person name="Oyama R."/>
            <person name="Ravasi T."/>
            <person name="Lenhard B."/>
            <person name="Wells C."/>
            <person name="Kodzius R."/>
            <person name="Shimokawa K."/>
            <person name="Bajic V.B."/>
            <person name="Brenner S.E."/>
            <person name="Batalov S."/>
            <person name="Forrest A.R."/>
            <person name="Zavolan M."/>
            <person name="Davis M.J."/>
            <person name="Wilming L.G."/>
            <person name="Aidinis V."/>
            <person name="Allen J.E."/>
            <person name="Ambesi-Impiombato A."/>
            <person name="Apweiler R."/>
            <person name="Aturaliya R.N."/>
            <person name="Bailey T.L."/>
            <person name="Bansal M."/>
            <person name="Baxter L."/>
            <person name="Beisel K.W."/>
            <person name="Bersano T."/>
            <person name="Bono H."/>
            <person name="Chalk A.M."/>
            <person name="Chiu K.P."/>
            <person name="Choudhary V."/>
            <person name="Christoffels A."/>
            <person name="Clutterbuck D.R."/>
            <person name="Crowe M.L."/>
            <person name="Dalla E."/>
            <person name="Dalrymple B.P."/>
            <person name="de Bono B."/>
            <person name="Della Gatta G."/>
            <person name="di Bernardo D."/>
            <person name="Down T."/>
            <person name="Engstrom P."/>
            <person name="Fagiolini M."/>
            <person name="Faulkner G."/>
            <person name="Fletcher C.F."/>
            <person name="Fukushima T."/>
            <person name="Furuno M."/>
            <person name="Futaki S."/>
            <person name="Gariboldi M."/>
            <person name="Georgii-Hemming P."/>
            <person name="Gingeras T.R."/>
            <person name="Gojobori T."/>
            <person name="Green R.E."/>
            <person name="Gustincich S."/>
            <person name="Harbers M."/>
            <person name="Hayashi Y."/>
            <person name="Hensch T.K."/>
            <person name="Hirokawa N."/>
            <person name="Hill D."/>
            <person name="Huminiecki L."/>
            <person name="Iacono M."/>
            <person name="Ikeo K."/>
            <person name="Iwama A."/>
            <person name="Ishikawa T."/>
            <person name="Jakt M."/>
            <person name="Kanapin A."/>
            <person name="Katoh M."/>
            <person name="Kawasawa Y."/>
            <person name="Kelso J."/>
            <person name="Kitamura H."/>
            <person name="Kitano H."/>
            <person name="Kollias G."/>
            <person name="Krishnan S.P."/>
            <person name="Kruger A."/>
            <person name="Kummerfeld S.K."/>
            <person name="Kurochkin I.V."/>
            <person name="Lareau L.F."/>
            <person name="Lazarevic D."/>
            <person name="Lipovich L."/>
            <person name="Liu J."/>
            <person name="Liuni S."/>
            <person name="McWilliam S."/>
            <person name="Madan Babu M."/>
            <person name="Madera M."/>
            <person name="Marchionni L."/>
            <person name="Matsuda H."/>
            <person name="Matsuzawa S."/>
            <person name="Miki H."/>
            <person name="Mignone F."/>
            <person name="Miyake S."/>
            <person name="Morris K."/>
            <person name="Mottagui-Tabar S."/>
            <person name="Mulder N."/>
            <person name="Nakano N."/>
            <person name="Nakauchi H."/>
            <person name="Ng P."/>
            <person name="Nilsson R."/>
            <person name="Nishiguchi S."/>
            <person name="Nishikawa S."/>
            <person name="Nori F."/>
            <person name="Ohara O."/>
            <person name="Okazaki Y."/>
            <person name="Orlando V."/>
            <person name="Pang K.C."/>
            <person name="Pavan W.J."/>
            <person name="Pavesi G."/>
            <person name="Pesole G."/>
            <person name="Petrovsky N."/>
            <person name="Piazza S."/>
            <person name="Reed J."/>
            <person name="Reid J.F."/>
            <person name="Ring B.Z."/>
            <person name="Ringwald M."/>
            <person name="Rost B."/>
            <person name="Ruan Y."/>
            <person name="Salzberg S.L."/>
            <person name="Sandelin A."/>
            <person name="Schneider C."/>
            <person name="Schoenbach C."/>
            <person name="Sekiguchi K."/>
            <person name="Semple C.A."/>
            <person name="Seno S."/>
            <person name="Sessa L."/>
            <person name="Sheng Y."/>
            <person name="Shibata Y."/>
            <person name="Shimada H."/>
            <person name="Shimada K."/>
            <person name="Silva D."/>
            <person name="Sinclair B."/>
            <person name="Sperling S."/>
            <person name="Stupka E."/>
            <person name="Sugiura K."/>
            <person name="Sultana R."/>
            <person name="Takenaka Y."/>
            <person name="Taki K."/>
            <person name="Tammoja K."/>
            <person name="Tan S.L."/>
            <person name="Tang S."/>
            <person name="Taylor M.S."/>
            <person name="Tegner J."/>
            <person name="Teichmann S.A."/>
            <person name="Ueda H.R."/>
            <person name="van Nimwegen E."/>
            <person name="Verardo R."/>
            <person name="Wei C.L."/>
            <person name="Yagi K."/>
            <person name="Yamanishi H."/>
            <person name="Zabarovsky E."/>
            <person name="Zhu S."/>
            <person name="Zimmer A."/>
            <person name="Hide W."/>
            <person name="Bult C."/>
            <person name="Grimmond S.M."/>
            <person name="Teasdale R.D."/>
            <person name="Liu E.T."/>
            <person name="Brusic V."/>
            <person name="Quackenbush J."/>
            <person name="Wahlestedt C."/>
            <person name="Mattick J.S."/>
            <person name="Hume D.A."/>
            <person name="Kai C."/>
            <person name="Sasaki D."/>
            <person name="Tomaru Y."/>
            <person name="Fukuda S."/>
            <person name="Kanamori-Katayama M."/>
            <person name="Suzuki M."/>
            <person name="Aoki J."/>
            <person name="Arakawa T."/>
            <person name="Iida J."/>
            <person name="Imamura K."/>
            <person name="Itoh M."/>
            <person name="Kato T."/>
            <person name="Kawaji H."/>
            <person name="Kawagashira N."/>
            <person name="Kawashima T."/>
            <person name="Kojima M."/>
            <person name="Kondo S."/>
            <person name="Konno H."/>
            <person name="Nakano K."/>
            <person name="Ninomiya N."/>
            <person name="Nishio T."/>
            <person name="Okada M."/>
            <person name="Plessy C."/>
            <person name="Shibata K."/>
            <person name="Shiraki T."/>
            <person name="Suzuki S."/>
            <person name="Tagami M."/>
            <person name="Waki K."/>
            <person name="Watahiki A."/>
            <person name="Okamura-Oho Y."/>
            <person name="Suzuki H."/>
            <person name="Kawai J."/>
            <person name="Hayashizaki Y."/>
        </authorList>
    </citation>
    <scope>NUCLEOTIDE SEQUENCE [LARGE SCALE MRNA] (ISOFORM 2)</scope>
    <scope>NUCLEOTIDE SEQUENCE [LARGE SCALE MRNA] OF 1-65 (ISOFORM 1)</scope>
    <source>
        <strain>C57BL/6J</strain>
        <tissue>Inner ear</tissue>
        <tissue>Liver tumor</tissue>
    </source>
</reference>
<reference key="2">
    <citation type="journal article" date="2004" name="Genome Res.">
        <title>The status, quality, and expansion of the NIH full-length cDNA project: the Mammalian Gene Collection (MGC).</title>
        <authorList>
            <consortium name="The MGC Project Team"/>
        </authorList>
    </citation>
    <scope>NUCLEOTIDE SEQUENCE [LARGE SCALE MRNA] (ISOFORM 2)</scope>
    <source>
        <tissue>Brain</tissue>
    </source>
</reference>
<reference key="3">
    <citation type="journal article" date="2005" name="Nature">
        <title>Asymmetric cell divisions promote stratification and differentiation of mammalian skin.</title>
        <authorList>
            <person name="Lechler T."/>
            <person name="Fuchs E."/>
        </authorList>
    </citation>
    <scope>NUCLEOTIDE SEQUENCE [MRNA] OF 48-579 (ISOFORM 1)</scope>
    <scope>FUNCTION</scope>
    <scope>TISSUE SPECIFICITY</scope>
    <scope>DEVELOPMENTAL STAGE</scope>
    <scope>INTERACTION WITH F2RL2 AND GPSM2</scope>
    <scope>SUBCELLULAR LOCATION</scope>
    <source>
        <strain>CD-1</strain>
        <tissue>Epidermis</tissue>
    </source>
</reference>
<reference key="4">
    <citation type="journal article" date="2005" name="Neuron">
        <title>Mammalian inscuteable regulates spindle orientation and cell fate in the developing retina.</title>
        <authorList>
            <person name="Zigman M."/>
            <person name="Cayouette M."/>
            <person name="Charalambous C."/>
            <person name="Schleiffer A."/>
            <person name="Hoeller O."/>
            <person name="Dunican D."/>
            <person name="McCudden C.R."/>
            <person name="Firnberg N."/>
            <person name="Barres B.A."/>
            <person name="Siderovski D.P."/>
            <person name="Knoblich J.A."/>
        </authorList>
    </citation>
    <scope>FUNCTION</scope>
    <scope>TISSUE SPECIFICITY</scope>
    <scope>SUBCELLULAR LOCATION</scope>
</reference>
<reference evidence="8" key="5">
    <citation type="journal article" date="2011" name="Mol. Cell">
        <title>LGN/mInsc and LGN/NuMA complex structures suggest distinct functions in asymmetric cell division for the Par3/mInsc/LGN and Galphai/LGN/NuMA pathways.</title>
        <authorList>
            <person name="Zhu J."/>
            <person name="Wen W."/>
            <person name="Zheng Z."/>
            <person name="Shang Y."/>
            <person name="Wei Z."/>
            <person name="Xiao Z."/>
            <person name="Pan Z."/>
            <person name="Du Q."/>
            <person name="Wang W."/>
            <person name="Zhang M."/>
        </authorList>
    </citation>
    <scope>X-RAY CRYSTALLOGRAPHY (1.10 ANGSTROMS) OF 66-87 IN COMPLEX WITH GPSM2</scope>
    <scope>FUNCTION</scope>
    <scope>INTERACTION WITH GPSM2</scope>
    <scope>SUBCELLULAR LOCATION</scope>
    <scope>MUTAGENESIS OF SER-74; TRP-78; MET-79 AND LEU-82</scope>
</reference>
<sequence>MRRPPGDGDSTGEGPGNWGLWGAQESRRLCCVGPDRCGQALLQIGINMMALPGGRHLDSVPLQEQRLHFMQVDSVQRWMEDLKLMTECECMCVLQAKPISLEEDTQGDLILAGGPGPGDPLQLLLKRGWVISTELRRIGQKLAQDRWARVHSMSVRLTCHARSMVSEYSTISRTASQEMGQAEKLLMEKCSELSAVTERCLQVENEHVLKSMKACVSETLSLLGEHFGQLLELALTREVQALVRKIDTSDNIYITESTTGNLFGLTQEGAPLCRIIAKEGGVVALFKVCRQDSFRCLYPQALRTLASICCVEEGVHQLEKVDGILCLADILTDESHSEATRAEAAAVVAQVTSPHLSFTQHLTSFLENMEEIVTALIKLCQEASSGEVFLLASAALANITFFDKMACEMLLQLNAIRVLLEACGDKQRVDTPYTRDQIVTILANMSVLEQCGSDIIQENGVQLIMGMLSEKPRSGTPAEVAACERVQQKAAVTLARLCRDPDVAQEAVRLSCMSRLIELCRSPSERNSSDAVLVACLAALRRLAGVCPEGLQDSDFQQLVQPRLVDSFLLCSNMEESFV</sequence>
<organism>
    <name type="scientific">Mus musculus</name>
    <name type="common">Mouse</name>
    <dbReference type="NCBI Taxonomy" id="10090"/>
    <lineage>
        <taxon>Eukaryota</taxon>
        <taxon>Metazoa</taxon>
        <taxon>Chordata</taxon>
        <taxon>Craniata</taxon>
        <taxon>Vertebrata</taxon>
        <taxon>Euteleostomi</taxon>
        <taxon>Mammalia</taxon>
        <taxon>Eutheria</taxon>
        <taxon>Euarchontoglires</taxon>
        <taxon>Glires</taxon>
        <taxon>Rodentia</taxon>
        <taxon>Myomorpha</taxon>
        <taxon>Muroidea</taxon>
        <taxon>Muridae</taxon>
        <taxon>Murinae</taxon>
        <taxon>Mus</taxon>
        <taxon>Mus</taxon>
    </lineage>
</organism>
<feature type="chain" id="PRO_0000252406" description="Protein inscuteable homolog">
    <location>
        <begin position="1"/>
        <end position="579"/>
    </location>
</feature>
<feature type="region of interest" description="Important for interaction with GPSM2" evidence="4">
    <location>
        <begin position="74"/>
        <end position="89"/>
    </location>
</feature>
<feature type="short sequence motif" description="PDZ-binding">
    <location>
        <begin position="576"/>
        <end position="579"/>
    </location>
</feature>
<feature type="splice variant" id="VSP_020951" description="In isoform 2." evidence="5 6">
    <location>
        <begin position="1"/>
        <end position="186"/>
    </location>
</feature>
<feature type="mutagenesis site" description="Abolishes interaction with GPSM2." evidence="4">
    <original>S</original>
    <variation>E</variation>
    <location>
        <position position="74"/>
    </location>
</feature>
<feature type="mutagenesis site" description="Abolishes interaction with GPSM2." evidence="4">
    <original>W</original>
    <variation>E</variation>
    <location>
        <position position="78"/>
    </location>
</feature>
<feature type="mutagenesis site" description="Abolishes interaction with GPSM2." evidence="4">
    <original>M</original>
    <variation>E</variation>
    <location>
        <position position="79"/>
    </location>
</feature>
<feature type="mutagenesis site" description="Abolishes interaction with GPSM2." evidence="4">
    <original>L</original>
    <variation>E</variation>
    <location>
        <position position="82"/>
    </location>
</feature>
<feature type="sequence conflict" description="In Ref. 3; ABA54267." evidence="7" ref="3">
    <original>V</original>
    <variation>L</variation>
    <location>
        <position position="560"/>
    </location>
</feature>
<feature type="helix" evidence="9">
    <location>
        <begin position="73"/>
        <end position="82"/>
    </location>
</feature>
<name>INSC_MOUSE</name>
<dbReference type="EMBL" id="AK050143">
    <property type="protein sequence ID" value="BAC34091.1"/>
    <property type="molecule type" value="mRNA"/>
</dbReference>
<dbReference type="EMBL" id="BY236076">
    <property type="status" value="NOT_ANNOTATED_CDS"/>
    <property type="molecule type" value="mRNA"/>
</dbReference>
<dbReference type="EMBL" id="BC139196">
    <property type="protein sequence ID" value="AAI39197.1"/>
    <property type="molecule type" value="mRNA"/>
</dbReference>
<dbReference type="EMBL" id="BC139197">
    <property type="protein sequence ID" value="AAI39198.1"/>
    <property type="molecule type" value="mRNA"/>
</dbReference>
<dbReference type="EMBL" id="DQ205645">
    <property type="protein sequence ID" value="ABA54267.1"/>
    <property type="molecule type" value="mRNA"/>
</dbReference>
<dbReference type="RefSeq" id="NP_001392617.1">
    <molecule id="Q3HNM7-1"/>
    <property type="nucleotide sequence ID" value="NM_001405688.1"/>
</dbReference>
<dbReference type="RefSeq" id="NP_776128.2">
    <property type="nucleotide sequence ID" value="NM_173767.3"/>
</dbReference>
<dbReference type="RefSeq" id="XP_006507722.1">
    <property type="nucleotide sequence ID" value="XM_006507659.3"/>
</dbReference>
<dbReference type="PDB" id="3RO3">
    <property type="method" value="X-ray"/>
    <property type="resolution" value="1.10 A"/>
    <property type="chains" value="B=66-87"/>
</dbReference>
<dbReference type="PDBsum" id="3RO3"/>
<dbReference type="SMR" id="Q3HNM7"/>
<dbReference type="BioGRID" id="231440">
    <property type="interactions" value="3"/>
</dbReference>
<dbReference type="FunCoup" id="Q3HNM7">
    <property type="interactions" value="16"/>
</dbReference>
<dbReference type="STRING" id="10090.ENSMUSP00000129505"/>
<dbReference type="iPTMnet" id="Q3HNM7"/>
<dbReference type="PhosphoSitePlus" id="Q3HNM7"/>
<dbReference type="PaxDb" id="10090-ENSMUSP00000112682"/>
<dbReference type="ProteomicsDB" id="269318">
    <molecule id="Q3HNM7-1"/>
</dbReference>
<dbReference type="ProteomicsDB" id="269319">
    <molecule id="Q3HNM7-2"/>
</dbReference>
<dbReference type="Ensembl" id="ENSMUST00000161800.3">
    <molecule id="Q3HNM7-1"/>
    <property type="protein sequence ID" value="ENSMUSP00000125061.3"/>
    <property type="gene ID" value="ENSMUSG00000048782.17"/>
</dbReference>
<dbReference type="GeneID" id="233752"/>
<dbReference type="KEGG" id="mmu:233752"/>
<dbReference type="UCSC" id="uc009jii.2">
    <molecule id="Q3HNM7-1"/>
    <property type="organism name" value="mouse"/>
</dbReference>
<dbReference type="AGR" id="MGI:1917942"/>
<dbReference type="CTD" id="387755"/>
<dbReference type="MGI" id="MGI:1917942">
    <property type="gene designation" value="Insc"/>
</dbReference>
<dbReference type="eggNOG" id="ENOG502QRY2">
    <property type="taxonomic scope" value="Eukaryota"/>
</dbReference>
<dbReference type="GeneTree" id="ENSGT00390000001511"/>
<dbReference type="InParanoid" id="Q3HNM7"/>
<dbReference type="OrthoDB" id="5796379at2759"/>
<dbReference type="PhylomeDB" id="Q3HNM7"/>
<dbReference type="BioGRID-ORCS" id="233752">
    <property type="hits" value="2 hits in 60 CRISPR screens"/>
</dbReference>
<dbReference type="ChiTaRS" id="Insc">
    <property type="organism name" value="mouse"/>
</dbReference>
<dbReference type="PRO" id="PR:Q3HNM7"/>
<dbReference type="Proteomes" id="UP000000589">
    <property type="component" value="Chromosome 7"/>
</dbReference>
<dbReference type="RNAct" id="Q3HNM7">
    <property type="molecule type" value="protein"/>
</dbReference>
<dbReference type="GO" id="GO:0005938">
    <property type="term" value="C:cell cortex"/>
    <property type="evidence" value="ECO:0007669"/>
    <property type="project" value="UniProtKB-SubCell"/>
</dbReference>
<dbReference type="GO" id="GO:0008356">
    <property type="term" value="P:asymmetric cell division"/>
    <property type="evidence" value="ECO:0007669"/>
    <property type="project" value="InterPro"/>
</dbReference>
<dbReference type="GO" id="GO:0030154">
    <property type="term" value="P:cell differentiation"/>
    <property type="evidence" value="ECO:0007669"/>
    <property type="project" value="UniProtKB-KW"/>
</dbReference>
<dbReference type="GO" id="GO:0007399">
    <property type="term" value="P:nervous system development"/>
    <property type="evidence" value="ECO:0007669"/>
    <property type="project" value="UniProtKB-KW"/>
</dbReference>
<dbReference type="CDD" id="cd21966">
    <property type="entry name" value="INSC_LBD"/>
    <property type="match status" value="1"/>
</dbReference>
<dbReference type="FunFam" id="1.25.10.10:FF:000188">
    <property type="entry name" value="protein inscuteable homolog isoform X1"/>
    <property type="match status" value="1"/>
</dbReference>
<dbReference type="Gene3D" id="6.20.200.10">
    <property type="entry name" value="Inscuteable LGN-binding domain"/>
    <property type="match status" value="1"/>
</dbReference>
<dbReference type="Gene3D" id="1.25.10.10">
    <property type="entry name" value="Leucine-rich Repeat Variant"/>
    <property type="match status" value="1"/>
</dbReference>
<dbReference type="InterPro" id="IPR011989">
    <property type="entry name" value="ARM-like"/>
</dbReference>
<dbReference type="InterPro" id="IPR016024">
    <property type="entry name" value="ARM-type_fold"/>
</dbReference>
<dbReference type="InterPro" id="IPR000225">
    <property type="entry name" value="Armadillo"/>
</dbReference>
<dbReference type="InterPro" id="IPR045789">
    <property type="entry name" value="Insc_C"/>
</dbReference>
<dbReference type="InterPro" id="IPR031938">
    <property type="entry name" value="INSC_LBD"/>
</dbReference>
<dbReference type="InterPro" id="IPR038205">
    <property type="entry name" value="INSC_LBD_sf"/>
</dbReference>
<dbReference type="InterPro" id="IPR039921">
    <property type="entry name" value="Inscuteable"/>
</dbReference>
<dbReference type="PANTHER" id="PTHR21386">
    <property type="entry name" value="INSCUTEABLE"/>
    <property type="match status" value="1"/>
</dbReference>
<dbReference type="PANTHER" id="PTHR21386:SF0">
    <property type="entry name" value="PROTEIN INSCUTEABLE HOMOLOG"/>
    <property type="match status" value="1"/>
</dbReference>
<dbReference type="Pfam" id="PF19427">
    <property type="entry name" value="Insc_C"/>
    <property type="match status" value="1"/>
</dbReference>
<dbReference type="Pfam" id="PF16748">
    <property type="entry name" value="INSC_LBD"/>
    <property type="match status" value="1"/>
</dbReference>
<dbReference type="SMART" id="SM00185">
    <property type="entry name" value="ARM"/>
    <property type="match status" value="3"/>
</dbReference>
<dbReference type="SUPFAM" id="SSF48371">
    <property type="entry name" value="ARM repeat"/>
    <property type="match status" value="1"/>
</dbReference>
<accession>Q3HNM7</accession>
<accession>B2RTA5</accession>
<accession>Q8C7I7</accession>